<protein>
    <recommendedName>
        <fullName evidence="2">Large ribosomal subunit protein eL21</fullName>
    </recommendedName>
    <alternativeName>
        <fullName>60S ribosomal protein L21-A</fullName>
    </alternativeName>
</protein>
<keyword id="KW-0002">3D-structure</keyword>
<keyword id="KW-0963">Cytoplasm</keyword>
<keyword id="KW-1185">Reference proteome</keyword>
<keyword id="KW-0687">Ribonucleoprotein</keyword>
<keyword id="KW-0689">Ribosomal protein</keyword>
<reference key="1">
    <citation type="journal article" date="2004" name="Proc. Natl. Acad. Sci. U.S.A.">
        <title>The diploid genome sequence of Candida albicans.</title>
        <authorList>
            <person name="Jones T."/>
            <person name="Federspiel N.A."/>
            <person name="Chibana H."/>
            <person name="Dungan J."/>
            <person name="Kalman S."/>
            <person name="Magee B.B."/>
            <person name="Newport G."/>
            <person name="Thorstenson Y.R."/>
            <person name="Agabian N."/>
            <person name="Magee P.T."/>
            <person name="Davis R.W."/>
            <person name="Scherer S."/>
        </authorList>
    </citation>
    <scope>NUCLEOTIDE SEQUENCE [LARGE SCALE GENOMIC DNA]</scope>
    <source>
        <strain>SC5314 / ATCC MYA-2876</strain>
    </source>
</reference>
<reference key="2">
    <citation type="journal article" date="2007" name="Genome Biol.">
        <title>Assembly of the Candida albicans genome into sixteen supercontigs aligned on the eight chromosomes.</title>
        <authorList>
            <person name="van het Hoog M."/>
            <person name="Rast T.J."/>
            <person name="Martchenko M."/>
            <person name="Grindle S."/>
            <person name="Dignard D."/>
            <person name="Hogues H."/>
            <person name="Cuomo C."/>
            <person name="Berriman M."/>
            <person name="Scherer S."/>
            <person name="Magee B.B."/>
            <person name="Whiteway M."/>
            <person name="Chibana H."/>
            <person name="Nantel A."/>
            <person name="Magee P.T."/>
        </authorList>
    </citation>
    <scope>GENOME REANNOTATION</scope>
    <source>
        <strain>SC5314 / ATCC MYA-2876</strain>
    </source>
</reference>
<reference key="3">
    <citation type="journal article" date="2013" name="Genome Biol.">
        <title>Assembly of a phased diploid Candida albicans genome facilitates allele-specific measurements and provides a simple model for repeat and indel structure.</title>
        <authorList>
            <person name="Muzzey D."/>
            <person name="Schwartz K."/>
            <person name="Weissman J.S."/>
            <person name="Sherlock G."/>
        </authorList>
    </citation>
    <scope>NUCLEOTIDE SEQUENCE [LARGE SCALE GENOMIC DNA]</scope>
    <scope>GENOME REANNOTATION</scope>
    <source>
        <strain>SC5314 / ATCC MYA-2876</strain>
    </source>
</reference>
<reference evidence="5 6 7" key="4">
    <citation type="journal article" date="2022" name="Sci. Adv.">
        <title>E-site drug specificity of the human pathogen Candida albicans ribosome.</title>
        <authorList>
            <person name="Zgadzay Y."/>
            <person name="Kolosova O."/>
            <person name="Stetsenko A."/>
            <person name="Wu C."/>
            <person name="Bruchlen D."/>
            <person name="Usachev K."/>
            <person name="Validov S."/>
            <person name="Jenner L."/>
            <person name="Rogachev A."/>
            <person name="Yusupova G."/>
            <person name="Sachs M.S."/>
            <person name="Guskov A."/>
            <person name="Yusupov M."/>
        </authorList>
    </citation>
    <scope>STRUCTURE BY ELECTRON MICROSCOPY (2.32 ANGSTROMS) OF THE 80S RIBOSOME</scope>
    <scope>SUBUNIT</scope>
</reference>
<sequence>MGKSRGYRSGTRYAFQRDFKKHGAIPLSTYLKVYKVGDIVDIKANGSIQKGMPHKYYHGKTGIVYNVTKSSVGVIINKVVGNRYIEKRVNLRVEHVKHSACRQEFLNRVKSNAAKKREAKANGETVYLKRQAAKPRGSRIISTEGNIPQTLAPVAYETFI</sequence>
<proteinExistence type="evidence at protein level"/>
<accession>A0A1D8PGY0</accession>
<dbReference type="EMBL" id="CP017624">
    <property type="protein sequence ID" value="AOW27410.1"/>
    <property type="molecule type" value="Genomic_DNA"/>
</dbReference>
<dbReference type="RefSeq" id="XP_019330761.1">
    <property type="nucleotide sequence ID" value="XM_019475216.1"/>
</dbReference>
<dbReference type="PDB" id="7PZY">
    <property type="method" value="EM"/>
    <property type="resolution" value="2.32 A"/>
    <property type="chains" value="2=1-160"/>
</dbReference>
<dbReference type="PDB" id="7Q08">
    <property type="method" value="EM"/>
    <property type="resolution" value="2.56 A"/>
    <property type="chains" value="2=1-160"/>
</dbReference>
<dbReference type="PDB" id="7Q0F">
    <property type="method" value="EM"/>
    <property type="resolution" value="2.64 A"/>
    <property type="chains" value="2=1-160"/>
</dbReference>
<dbReference type="PDB" id="7Q0P">
    <property type="method" value="EM"/>
    <property type="resolution" value="2.77 A"/>
    <property type="chains" value="2=1-160"/>
</dbReference>
<dbReference type="PDB" id="7Q0R">
    <property type="method" value="EM"/>
    <property type="resolution" value="2.67 A"/>
    <property type="chains" value="2=1-160"/>
</dbReference>
<dbReference type="PDB" id="8C3A">
    <property type="method" value="X-ray"/>
    <property type="resolution" value="3.00 A"/>
    <property type="chains" value="2/BO=1-160"/>
</dbReference>
<dbReference type="PDB" id="8OGJ">
    <property type="method" value="EM"/>
    <property type="resolution" value="3.10 A"/>
    <property type="chains" value="2=1-160"/>
</dbReference>
<dbReference type="PDB" id="8OH6">
    <property type="method" value="X-ray"/>
    <property type="resolution" value="3.35 A"/>
    <property type="chains" value="2/BO=1-160"/>
</dbReference>
<dbReference type="PDB" id="8OI5">
    <property type="method" value="X-ray"/>
    <property type="resolution" value="2.90 A"/>
    <property type="chains" value="2/BO=1-160"/>
</dbReference>
<dbReference type="PDB" id="8OJ3">
    <property type="method" value="X-ray"/>
    <property type="resolution" value="3.50 A"/>
    <property type="chains" value="2/BO=1-160"/>
</dbReference>
<dbReference type="PDBsum" id="7PZY"/>
<dbReference type="PDBsum" id="7Q08"/>
<dbReference type="PDBsum" id="7Q0F"/>
<dbReference type="PDBsum" id="7Q0P"/>
<dbReference type="PDBsum" id="7Q0R"/>
<dbReference type="PDBsum" id="8C3A"/>
<dbReference type="PDBsum" id="8OGJ"/>
<dbReference type="PDBsum" id="8OH6"/>
<dbReference type="PDBsum" id="8OI5"/>
<dbReference type="PDBsum" id="8OJ3"/>
<dbReference type="SMR" id="A0A1D8PGY0"/>
<dbReference type="FunCoup" id="A0A1D8PGY0">
    <property type="interactions" value="833"/>
</dbReference>
<dbReference type="STRING" id="237561.A0A1D8PGY0"/>
<dbReference type="EnsemblFungi" id="C2_03810C_A-T">
    <property type="protein sequence ID" value="C2_03810C_A-T-p1"/>
    <property type="gene ID" value="C2_03810C_A"/>
</dbReference>
<dbReference type="GeneID" id="3637400"/>
<dbReference type="KEGG" id="cal:CAALFM_C203810CA"/>
<dbReference type="CGD" id="CAL0000194631">
    <property type="gene designation" value="RPL21A"/>
</dbReference>
<dbReference type="VEuPathDB" id="FungiDB:C2_03810C_A"/>
<dbReference type="eggNOG" id="KOG1732">
    <property type="taxonomic scope" value="Eukaryota"/>
</dbReference>
<dbReference type="InParanoid" id="A0A1D8PGY0"/>
<dbReference type="OMA" id="INYGDYV"/>
<dbReference type="OrthoDB" id="1539250at2759"/>
<dbReference type="Proteomes" id="UP000000559">
    <property type="component" value="Chromosome 2"/>
</dbReference>
<dbReference type="GO" id="GO:0022625">
    <property type="term" value="C:cytosolic large ribosomal subunit"/>
    <property type="evidence" value="ECO:0000318"/>
    <property type="project" value="GO_Central"/>
</dbReference>
<dbReference type="GO" id="GO:0003735">
    <property type="term" value="F:structural constituent of ribosome"/>
    <property type="evidence" value="ECO:0000318"/>
    <property type="project" value="GO_Central"/>
</dbReference>
<dbReference type="GO" id="GO:0006412">
    <property type="term" value="P:translation"/>
    <property type="evidence" value="ECO:0007669"/>
    <property type="project" value="InterPro"/>
</dbReference>
<dbReference type="FunFam" id="2.30.30.70:FF:000001">
    <property type="entry name" value="60S ribosomal protein L21"/>
    <property type="match status" value="1"/>
</dbReference>
<dbReference type="FunFam" id="6.10.250.3260:FF:000001">
    <property type="entry name" value="60S ribosomal protein L21"/>
    <property type="match status" value="1"/>
</dbReference>
<dbReference type="Gene3D" id="6.10.250.3260">
    <property type="match status" value="1"/>
</dbReference>
<dbReference type="Gene3D" id="2.30.30.70">
    <property type="entry name" value="Ribosomal protein L21"/>
    <property type="match status" value="1"/>
</dbReference>
<dbReference type="InterPro" id="IPR001147">
    <property type="entry name" value="Ribosomal_eL21"/>
</dbReference>
<dbReference type="InterPro" id="IPR018259">
    <property type="entry name" value="Ribosomal_eL21_CS"/>
</dbReference>
<dbReference type="InterPro" id="IPR036948">
    <property type="entry name" value="Ribosomal_eL21_sf"/>
</dbReference>
<dbReference type="InterPro" id="IPR008991">
    <property type="entry name" value="Translation_prot_SH3-like_sf"/>
</dbReference>
<dbReference type="PANTHER" id="PTHR20981">
    <property type="entry name" value="60S RIBOSOMAL PROTEIN L21"/>
    <property type="match status" value="1"/>
</dbReference>
<dbReference type="Pfam" id="PF01157">
    <property type="entry name" value="Ribosomal_L21e"/>
    <property type="match status" value="1"/>
</dbReference>
<dbReference type="SUPFAM" id="SSF50104">
    <property type="entry name" value="Translation proteins SH3-like domain"/>
    <property type="match status" value="1"/>
</dbReference>
<dbReference type="PROSITE" id="PS01171">
    <property type="entry name" value="RIBOSOMAL_L21E"/>
    <property type="match status" value="1"/>
</dbReference>
<name>RL21A_CANAL</name>
<feature type="chain" id="PRO_0000456515" description="Large ribosomal subunit protein eL21">
    <location>
        <begin position="1"/>
        <end position="160"/>
    </location>
</feature>
<comment type="function">
    <text evidence="4">Component of the ribosome, a large ribonucleoprotein complex responsible for the synthesis of proteins in the cell. The small ribosomal subunit (SSU) binds messenger RNAs (mRNAs) and translates the encoded message by selecting cognate aminoacyl-transfer RNA (tRNA) molecules. The large subunit (LSU) contains the ribosomal catalytic site termed the peptidyl transferase center (PTC), which catalyzes the formation of peptide bonds, thereby polymerizing the amino acids delivered by tRNAs into a polypeptide chain. The nascent polypeptides leave the ribosome through a tunnel in the LSU and interact with protein factors that function in enzymatic processing, targeting, and the membrane insertion of nascent chains at the exit of the ribosomal tunnel.</text>
</comment>
<comment type="subunit">
    <text evidence="1">Component of the large ribosomal subunit (PubMed:35613268). Mature ribosomes consist of a small (40S) and a large (60S) subunit (PubMed:35613268). The 40S subunit contains about 32 different proteins and 1 molecule of RNA (18S) (PubMed:35613268). The 60S subunit contains 45 different proteins and 3 molecules of RNA (25S, 5.8S and 5S) (PubMed:35613268).</text>
</comment>
<comment type="subcellular location">
    <subcellularLocation>
        <location evidence="4">Cytoplasm</location>
    </subcellularLocation>
</comment>
<comment type="similarity">
    <text evidence="3">Belongs to the eukaryotic ribosomal protein eL21 family.</text>
</comment>
<gene>
    <name evidence="2" type="primary">RPL21A</name>
    <name type="ordered locus">orf19.840</name>
    <name type="ORF">CAALFM_C203810CA</name>
</gene>
<organism>
    <name type="scientific">Candida albicans (strain SC5314 / ATCC MYA-2876)</name>
    <name type="common">Yeast</name>
    <dbReference type="NCBI Taxonomy" id="237561"/>
    <lineage>
        <taxon>Eukaryota</taxon>
        <taxon>Fungi</taxon>
        <taxon>Dikarya</taxon>
        <taxon>Ascomycota</taxon>
        <taxon>Saccharomycotina</taxon>
        <taxon>Pichiomycetes</taxon>
        <taxon>Debaryomycetaceae</taxon>
        <taxon>Candida/Lodderomyces clade</taxon>
        <taxon>Candida</taxon>
    </lineage>
</organism>
<evidence type="ECO:0000269" key="1">
    <source>
    </source>
</evidence>
<evidence type="ECO:0000303" key="2">
    <source>
    </source>
</evidence>
<evidence type="ECO:0000305" key="3"/>
<evidence type="ECO:0000305" key="4">
    <source>
    </source>
</evidence>
<evidence type="ECO:0007744" key="5">
    <source>
        <dbReference type="PDB" id="7PZY"/>
    </source>
</evidence>
<evidence type="ECO:0007744" key="6">
    <source>
        <dbReference type="PDB" id="7Q0F"/>
    </source>
</evidence>
<evidence type="ECO:0007744" key="7">
    <source>
        <dbReference type="PDB" id="7Q0P"/>
    </source>
</evidence>